<proteinExistence type="inferred from homology"/>
<evidence type="ECO:0000250" key="1"/>
<evidence type="ECO:0000255" key="2">
    <source>
        <dbReference type="PROSITE-ProRule" id="PRU01213"/>
    </source>
</evidence>
<evidence type="ECO:0000305" key="3"/>
<gene>
    <name type="ordered locus">HI_1370</name>
</gene>
<name>MOP_HAEIN</name>
<feature type="chain" id="PRO_0000096535" description="Probable molybdenum-pterin-binding protein">
    <location>
        <begin position="1"/>
        <end position="69"/>
    </location>
</feature>
<feature type="domain" description="Mop" evidence="2">
    <location>
        <begin position="2"/>
        <end position="68"/>
    </location>
</feature>
<dbReference type="EMBL" id="L42023">
    <property type="protein sequence ID" value="AAC23017.1"/>
    <property type="molecule type" value="Genomic_DNA"/>
</dbReference>
<dbReference type="PIR" id="I64119">
    <property type="entry name" value="I64119"/>
</dbReference>
<dbReference type="RefSeq" id="NP_439521.1">
    <property type="nucleotide sequence ID" value="NC_000907.1"/>
</dbReference>
<dbReference type="SMR" id="P45183"/>
<dbReference type="STRING" id="71421.HI_1370"/>
<dbReference type="EnsemblBacteria" id="AAC23017">
    <property type="protein sequence ID" value="AAC23017"/>
    <property type="gene ID" value="HI_1370"/>
</dbReference>
<dbReference type="KEGG" id="hin:HI_1370"/>
<dbReference type="PATRIC" id="fig|71421.8.peg.1424"/>
<dbReference type="eggNOG" id="COG3585">
    <property type="taxonomic scope" value="Bacteria"/>
</dbReference>
<dbReference type="HOGENOM" id="CLU_118993_1_1_6"/>
<dbReference type="OrthoDB" id="9800709at2"/>
<dbReference type="PhylomeDB" id="P45183"/>
<dbReference type="BioCyc" id="HINF71421:G1GJ1-1395-MONOMER"/>
<dbReference type="Proteomes" id="UP000000579">
    <property type="component" value="Chromosome"/>
</dbReference>
<dbReference type="GO" id="GO:0015689">
    <property type="term" value="P:molybdate ion transport"/>
    <property type="evidence" value="ECO:0007669"/>
    <property type="project" value="InterPro"/>
</dbReference>
<dbReference type="Gene3D" id="2.40.50.100">
    <property type="match status" value="1"/>
</dbReference>
<dbReference type="InterPro" id="IPR008995">
    <property type="entry name" value="Mo/tungstate-bd_C_term_dom"/>
</dbReference>
<dbReference type="InterPro" id="IPR004606">
    <property type="entry name" value="Mop_domain"/>
</dbReference>
<dbReference type="InterPro" id="IPR005116">
    <property type="entry name" value="Transp-assoc_OB_typ1"/>
</dbReference>
<dbReference type="NCBIfam" id="TIGR00638">
    <property type="entry name" value="Mop"/>
    <property type="match status" value="1"/>
</dbReference>
<dbReference type="Pfam" id="PF03459">
    <property type="entry name" value="TOBE"/>
    <property type="match status" value="1"/>
</dbReference>
<dbReference type="SUPFAM" id="SSF50331">
    <property type="entry name" value="MOP-like"/>
    <property type="match status" value="1"/>
</dbReference>
<dbReference type="PROSITE" id="PS51866">
    <property type="entry name" value="MOP"/>
    <property type="match status" value="1"/>
</dbReference>
<comment type="function">
    <text evidence="1">Binds one mole of molybdenum per mole of protein and contains a pterin.</text>
</comment>
<comment type="similarity">
    <text evidence="3">To C.pasteurianum MOP proteins.</text>
</comment>
<protein>
    <recommendedName>
        <fullName>Probable molybdenum-pterin-binding protein</fullName>
    </recommendedName>
</protein>
<accession>P45183</accession>
<organism>
    <name type="scientific">Haemophilus influenzae (strain ATCC 51907 / DSM 11121 / KW20 / Rd)</name>
    <dbReference type="NCBI Taxonomy" id="71421"/>
    <lineage>
        <taxon>Bacteria</taxon>
        <taxon>Pseudomonadati</taxon>
        <taxon>Pseudomonadota</taxon>
        <taxon>Gammaproteobacteria</taxon>
        <taxon>Pasteurellales</taxon>
        <taxon>Pasteurellaceae</taxon>
        <taxon>Haemophilus</taxon>
    </lineage>
</organism>
<keyword id="KW-0500">Molybdenum</keyword>
<keyword id="KW-1185">Reference proteome</keyword>
<reference key="1">
    <citation type="journal article" date="1995" name="Science">
        <title>Whole-genome random sequencing and assembly of Haemophilus influenzae Rd.</title>
        <authorList>
            <person name="Fleischmann R.D."/>
            <person name="Adams M.D."/>
            <person name="White O."/>
            <person name="Clayton R.A."/>
            <person name="Kirkness E.F."/>
            <person name="Kerlavage A.R."/>
            <person name="Bult C.J."/>
            <person name="Tomb J.-F."/>
            <person name="Dougherty B.A."/>
            <person name="Merrick J.M."/>
            <person name="McKenney K."/>
            <person name="Sutton G.G."/>
            <person name="FitzHugh W."/>
            <person name="Fields C.A."/>
            <person name="Gocayne J.D."/>
            <person name="Scott J.D."/>
            <person name="Shirley R."/>
            <person name="Liu L.-I."/>
            <person name="Glodek A."/>
            <person name="Kelley J.M."/>
            <person name="Weidman J.F."/>
            <person name="Phillips C.A."/>
            <person name="Spriggs T."/>
            <person name="Hedblom E."/>
            <person name="Cotton M.D."/>
            <person name="Utterback T.R."/>
            <person name="Hanna M.C."/>
            <person name="Nguyen D.T."/>
            <person name="Saudek D.M."/>
            <person name="Brandon R.C."/>
            <person name="Fine L.D."/>
            <person name="Fritchman J.L."/>
            <person name="Fuhrmann J.L."/>
            <person name="Geoghagen N.S.M."/>
            <person name="Gnehm C.L."/>
            <person name="McDonald L.A."/>
            <person name="Small K.V."/>
            <person name="Fraser C.M."/>
            <person name="Smith H.O."/>
            <person name="Venter J.C."/>
        </authorList>
    </citation>
    <scope>NUCLEOTIDE SEQUENCE [LARGE SCALE GENOMIC DNA]</scope>
    <source>
        <strain>ATCC 51907 / DSM 11121 / KW20 / Rd</strain>
    </source>
</reference>
<sequence>MKISARNQLKGKVVSIENGSVNAIVHIDIGGGNVLSSTVSLAAVKELNLEVGKEAYAIIKATSVMVGVE</sequence>